<feature type="chain" id="PRO_1000213933" description="Uracil phosphoribosyltransferase">
    <location>
        <begin position="1"/>
        <end position="209"/>
    </location>
</feature>
<feature type="binding site" evidence="1">
    <location>
        <position position="79"/>
    </location>
    <ligand>
        <name>5-phospho-alpha-D-ribose 1-diphosphate</name>
        <dbReference type="ChEBI" id="CHEBI:58017"/>
    </ligand>
</feature>
<feature type="binding site" evidence="1">
    <location>
        <position position="104"/>
    </location>
    <ligand>
        <name>5-phospho-alpha-D-ribose 1-diphosphate</name>
        <dbReference type="ChEBI" id="CHEBI:58017"/>
    </ligand>
</feature>
<feature type="binding site" evidence="1">
    <location>
        <begin position="131"/>
        <end position="139"/>
    </location>
    <ligand>
        <name>5-phospho-alpha-D-ribose 1-diphosphate</name>
        <dbReference type="ChEBI" id="CHEBI:58017"/>
    </ligand>
</feature>
<feature type="binding site" evidence="1">
    <location>
        <position position="194"/>
    </location>
    <ligand>
        <name>uracil</name>
        <dbReference type="ChEBI" id="CHEBI:17568"/>
    </ligand>
</feature>
<feature type="binding site" evidence="1">
    <location>
        <begin position="199"/>
        <end position="201"/>
    </location>
    <ligand>
        <name>uracil</name>
        <dbReference type="ChEBI" id="CHEBI:17568"/>
    </ligand>
</feature>
<feature type="binding site" evidence="1">
    <location>
        <position position="200"/>
    </location>
    <ligand>
        <name>5-phospho-alpha-D-ribose 1-diphosphate</name>
        <dbReference type="ChEBI" id="CHEBI:58017"/>
    </ligand>
</feature>
<keyword id="KW-0021">Allosteric enzyme</keyword>
<keyword id="KW-0328">Glycosyltransferase</keyword>
<keyword id="KW-0342">GTP-binding</keyword>
<keyword id="KW-0460">Magnesium</keyword>
<keyword id="KW-0547">Nucleotide-binding</keyword>
<keyword id="KW-0808">Transferase</keyword>
<proteinExistence type="inferred from homology"/>
<comment type="function">
    <text evidence="1">Catalyzes the conversion of uracil and 5-phospho-alpha-D-ribose 1-diphosphate (PRPP) to UMP and diphosphate.</text>
</comment>
<comment type="catalytic activity">
    <reaction evidence="1">
        <text>UMP + diphosphate = 5-phospho-alpha-D-ribose 1-diphosphate + uracil</text>
        <dbReference type="Rhea" id="RHEA:13017"/>
        <dbReference type="ChEBI" id="CHEBI:17568"/>
        <dbReference type="ChEBI" id="CHEBI:33019"/>
        <dbReference type="ChEBI" id="CHEBI:57865"/>
        <dbReference type="ChEBI" id="CHEBI:58017"/>
        <dbReference type="EC" id="2.4.2.9"/>
    </reaction>
</comment>
<comment type="cofactor">
    <cofactor evidence="1">
        <name>Mg(2+)</name>
        <dbReference type="ChEBI" id="CHEBI:18420"/>
    </cofactor>
    <text evidence="1">Binds 1 Mg(2+) ion per subunit. The magnesium is bound as Mg-PRPP.</text>
</comment>
<comment type="activity regulation">
    <text evidence="1">Allosterically activated by GTP.</text>
</comment>
<comment type="pathway">
    <text evidence="1">Pyrimidine metabolism; UMP biosynthesis via salvage pathway; UMP from uracil: step 1/1.</text>
</comment>
<comment type="similarity">
    <text evidence="1">Belongs to the UPRTase family.</text>
</comment>
<organism>
    <name type="scientific">Geobacter sp. (strain M21)</name>
    <dbReference type="NCBI Taxonomy" id="443144"/>
    <lineage>
        <taxon>Bacteria</taxon>
        <taxon>Pseudomonadati</taxon>
        <taxon>Thermodesulfobacteriota</taxon>
        <taxon>Desulfuromonadia</taxon>
        <taxon>Geobacterales</taxon>
        <taxon>Geobacteraceae</taxon>
        <taxon>Geobacter</taxon>
    </lineage>
</organism>
<accession>C6DZH8</accession>
<dbReference type="EC" id="2.4.2.9" evidence="1"/>
<dbReference type="EMBL" id="CP001661">
    <property type="protein sequence ID" value="ACT16560.1"/>
    <property type="molecule type" value="Genomic_DNA"/>
</dbReference>
<dbReference type="SMR" id="C6DZH8"/>
<dbReference type="STRING" id="443144.GM21_0480"/>
<dbReference type="KEGG" id="gem:GM21_0480"/>
<dbReference type="eggNOG" id="COG0035">
    <property type="taxonomic scope" value="Bacteria"/>
</dbReference>
<dbReference type="HOGENOM" id="CLU_067096_2_2_7"/>
<dbReference type="OrthoDB" id="9781675at2"/>
<dbReference type="UniPathway" id="UPA00574">
    <property type="reaction ID" value="UER00636"/>
</dbReference>
<dbReference type="GO" id="GO:0005525">
    <property type="term" value="F:GTP binding"/>
    <property type="evidence" value="ECO:0007669"/>
    <property type="project" value="UniProtKB-KW"/>
</dbReference>
<dbReference type="GO" id="GO:0000287">
    <property type="term" value="F:magnesium ion binding"/>
    <property type="evidence" value="ECO:0007669"/>
    <property type="project" value="UniProtKB-UniRule"/>
</dbReference>
<dbReference type="GO" id="GO:0004845">
    <property type="term" value="F:uracil phosphoribosyltransferase activity"/>
    <property type="evidence" value="ECO:0007669"/>
    <property type="project" value="UniProtKB-UniRule"/>
</dbReference>
<dbReference type="GO" id="GO:0044206">
    <property type="term" value="P:UMP salvage"/>
    <property type="evidence" value="ECO:0007669"/>
    <property type="project" value="UniProtKB-UniRule"/>
</dbReference>
<dbReference type="GO" id="GO:0006223">
    <property type="term" value="P:uracil salvage"/>
    <property type="evidence" value="ECO:0007669"/>
    <property type="project" value="InterPro"/>
</dbReference>
<dbReference type="CDD" id="cd06223">
    <property type="entry name" value="PRTases_typeI"/>
    <property type="match status" value="1"/>
</dbReference>
<dbReference type="FunFam" id="3.40.50.2020:FF:000003">
    <property type="entry name" value="Uracil phosphoribosyltransferase"/>
    <property type="match status" value="1"/>
</dbReference>
<dbReference type="Gene3D" id="3.40.50.2020">
    <property type="match status" value="1"/>
</dbReference>
<dbReference type="HAMAP" id="MF_01218_B">
    <property type="entry name" value="Upp_B"/>
    <property type="match status" value="1"/>
</dbReference>
<dbReference type="InterPro" id="IPR000836">
    <property type="entry name" value="PRibTrfase_dom"/>
</dbReference>
<dbReference type="InterPro" id="IPR029057">
    <property type="entry name" value="PRTase-like"/>
</dbReference>
<dbReference type="InterPro" id="IPR034332">
    <property type="entry name" value="Upp_B"/>
</dbReference>
<dbReference type="InterPro" id="IPR050054">
    <property type="entry name" value="UPRTase/APRTase"/>
</dbReference>
<dbReference type="InterPro" id="IPR005765">
    <property type="entry name" value="Ura_phspho_trans"/>
</dbReference>
<dbReference type="NCBIfam" id="NF001097">
    <property type="entry name" value="PRK00129.1"/>
    <property type="match status" value="1"/>
</dbReference>
<dbReference type="NCBIfam" id="TIGR01091">
    <property type="entry name" value="upp"/>
    <property type="match status" value="1"/>
</dbReference>
<dbReference type="PANTHER" id="PTHR32315">
    <property type="entry name" value="ADENINE PHOSPHORIBOSYLTRANSFERASE"/>
    <property type="match status" value="1"/>
</dbReference>
<dbReference type="PANTHER" id="PTHR32315:SF4">
    <property type="entry name" value="URACIL PHOSPHORIBOSYLTRANSFERASE, CHLOROPLASTIC"/>
    <property type="match status" value="1"/>
</dbReference>
<dbReference type="Pfam" id="PF14681">
    <property type="entry name" value="UPRTase"/>
    <property type="match status" value="1"/>
</dbReference>
<dbReference type="SUPFAM" id="SSF53271">
    <property type="entry name" value="PRTase-like"/>
    <property type="match status" value="1"/>
</dbReference>
<evidence type="ECO:0000255" key="1">
    <source>
        <dbReference type="HAMAP-Rule" id="MF_01218"/>
    </source>
</evidence>
<name>UPP_GEOSM</name>
<reference key="1">
    <citation type="submission" date="2009-07" db="EMBL/GenBank/DDBJ databases">
        <title>Complete sequence of Geobacter sp. M21.</title>
        <authorList>
            <consortium name="US DOE Joint Genome Institute"/>
            <person name="Lucas S."/>
            <person name="Copeland A."/>
            <person name="Lapidus A."/>
            <person name="Glavina del Rio T."/>
            <person name="Dalin E."/>
            <person name="Tice H."/>
            <person name="Bruce D."/>
            <person name="Goodwin L."/>
            <person name="Pitluck S."/>
            <person name="Saunders E."/>
            <person name="Brettin T."/>
            <person name="Detter J.C."/>
            <person name="Han C."/>
            <person name="Larimer F."/>
            <person name="Land M."/>
            <person name="Hauser L."/>
            <person name="Kyrpides N."/>
            <person name="Ovchinnikova G."/>
            <person name="Lovley D."/>
        </authorList>
    </citation>
    <scope>NUCLEOTIDE SEQUENCE [LARGE SCALE GENOMIC DNA]</scope>
    <source>
        <strain>M21</strain>
    </source>
</reference>
<protein>
    <recommendedName>
        <fullName evidence="1">Uracil phosphoribosyltransferase</fullName>
        <ecNumber evidence="1">2.4.2.9</ecNumber>
    </recommendedName>
    <alternativeName>
        <fullName evidence="1">UMP pyrophosphorylase</fullName>
    </alternativeName>
    <alternativeName>
        <fullName evidence="1">UPRTase</fullName>
    </alternativeName>
</protein>
<sequence length="209" mass="22729">MSVHEVNHPLVKHKIGLMREAGISTKKFRELTSEIASLLAYEASRDFQIEPRTITGWDGSKVGIQQLKGKKVTVVPILRAGIGMLDGVLDMIPNAKVSVVGLARNEETLEAHTYFERFVGNLDERLALIIDPMLATGGSMAATIEMLKNNGCLQIRVLCLVAAPEGLARITAAYPEIDIYVAAIDERLNEQGYILPGLGDAGDKIFGTK</sequence>
<gene>
    <name evidence="1" type="primary">upp</name>
    <name type="ordered locus">GM21_0480</name>
</gene>